<keyword id="KW-0030">Aminoacyl-tRNA synthetase</keyword>
<keyword id="KW-0067">ATP-binding</keyword>
<keyword id="KW-0963">Cytoplasm</keyword>
<keyword id="KW-0436">Ligase</keyword>
<keyword id="KW-0547">Nucleotide-binding</keyword>
<keyword id="KW-0648">Protein biosynthesis</keyword>
<gene>
    <name evidence="1" type="primary">argS</name>
    <name type="ordered locus">LBF_2035</name>
</gene>
<sequence>MKANQLLKNLVLTELESAVSSYLTKQKIDLPLTEFKIRIEYSRDEKFGDYSSPFALENKNILKLNPKEIAEGVLSEIKNETLFEFVTFSPPGFINFRIRSQFLIQYTNQVMSPMVTFAKTDEKQSILLEFVSANPTGPMNIVSARSAAYGDALANLLLSLGHTVKREFYVNDYGNQVYLLGVAVLLRIFEEKGEKISFQEDESKESVFTLIEKRILPKESYRGEYIRDIAKEVLSNKTKSIQVEEWIQNKNWDECIHDLSKYAVEYNLSRQKEDLKLFGVHFDQFFSERSLHEAGDVENVPTLLKKEDVSTIDGKLHFLSTQYGDDKDRVIRREDGRPTYLMADIAYHFDKYKRGFTKLIDIWGPDHYGYIARLKGAVLSFGKSNDSFLILIAQQVNLIENKEKVKMSKRLGIFQTMRDLLSYLGKNGKDVGRYFFLMRSSDAPLDFDLDLAKDESDKNPVFYIQYAHARICSIFRELQISIADWSIPKVVSGDCFQSEERLRLLFWVARFQEEVYDTATNLEPHRLTNYLQSLSKAFTKFYSHKDNRIKEKQGEEREQLLFLILFTKRAIASGLELLGISSPEKMSKEDESNT</sequence>
<name>SYR_LEPBA</name>
<protein>
    <recommendedName>
        <fullName evidence="1">Arginine--tRNA ligase</fullName>
        <ecNumber evidence="1">6.1.1.19</ecNumber>
    </recommendedName>
    <alternativeName>
        <fullName evidence="1">Arginyl-tRNA synthetase</fullName>
        <shortName evidence="1">ArgRS</shortName>
    </alternativeName>
</protein>
<evidence type="ECO:0000255" key="1">
    <source>
        <dbReference type="HAMAP-Rule" id="MF_00123"/>
    </source>
</evidence>
<proteinExistence type="inferred from homology"/>
<reference key="1">
    <citation type="journal article" date="2008" name="PLoS ONE">
        <title>Genome sequence of the saprophyte Leptospira biflexa provides insights into the evolution of Leptospira and the pathogenesis of leptospirosis.</title>
        <authorList>
            <person name="Picardeau M."/>
            <person name="Bulach D.M."/>
            <person name="Bouchier C."/>
            <person name="Zuerner R.L."/>
            <person name="Zidane N."/>
            <person name="Wilson P.J."/>
            <person name="Creno S."/>
            <person name="Kuczek E.S."/>
            <person name="Bommezzadri S."/>
            <person name="Davis J.C."/>
            <person name="McGrath A."/>
            <person name="Johnson M.J."/>
            <person name="Boursaux-Eude C."/>
            <person name="Seemann T."/>
            <person name="Rouy Z."/>
            <person name="Coppel R.L."/>
            <person name="Rood J.I."/>
            <person name="Lajus A."/>
            <person name="Davies J.K."/>
            <person name="Medigue C."/>
            <person name="Adler B."/>
        </authorList>
    </citation>
    <scope>NUCLEOTIDE SEQUENCE [LARGE SCALE GENOMIC DNA]</scope>
    <source>
        <strain>Patoc 1 / Ames</strain>
    </source>
</reference>
<organism>
    <name type="scientific">Leptospira biflexa serovar Patoc (strain Patoc 1 / Ames)</name>
    <dbReference type="NCBI Taxonomy" id="355278"/>
    <lineage>
        <taxon>Bacteria</taxon>
        <taxon>Pseudomonadati</taxon>
        <taxon>Spirochaetota</taxon>
        <taxon>Spirochaetia</taxon>
        <taxon>Leptospirales</taxon>
        <taxon>Leptospiraceae</taxon>
        <taxon>Leptospira</taxon>
    </lineage>
</organism>
<dbReference type="EC" id="6.1.1.19" evidence="1"/>
<dbReference type="EMBL" id="CP000777">
    <property type="protein sequence ID" value="ABZ94535.1"/>
    <property type="molecule type" value="Genomic_DNA"/>
</dbReference>
<dbReference type="RefSeq" id="WP_012389061.1">
    <property type="nucleotide sequence ID" value="NC_010842.1"/>
</dbReference>
<dbReference type="SMR" id="B0SB29"/>
<dbReference type="KEGG" id="lbf:LBF_2035"/>
<dbReference type="HOGENOM" id="CLU_006406_0_1_12"/>
<dbReference type="GO" id="GO:0005737">
    <property type="term" value="C:cytoplasm"/>
    <property type="evidence" value="ECO:0007669"/>
    <property type="project" value="UniProtKB-SubCell"/>
</dbReference>
<dbReference type="GO" id="GO:0004814">
    <property type="term" value="F:arginine-tRNA ligase activity"/>
    <property type="evidence" value="ECO:0007669"/>
    <property type="project" value="UniProtKB-UniRule"/>
</dbReference>
<dbReference type="GO" id="GO:0005524">
    <property type="term" value="F:ATP binding"/>
    <property type="evidence" value="ECO:0007669"/>
    <property type="project" value="UniProtKB-UniRule"/>
</dbReference>
<dbReference type="GO" id="GO:0006420">
    <property type="term" value="P:arginyl-tRNA aminoacylation"/>
    <property type="evidence" value="ECO:0007669"/>
    <property type="project" value="UniProtKB-UniRule"/>
</dbReference>
<dbReference type="CDD" id="cd00671">
    <property type="entry name" value="ArgRS_core"/>
    <property type="match status" value="1"/>
</dbReference>
<dbReference type="FunFam" id="1.10.730.10:FF:000008">
    <property type="entry name" value="Arginine--tRNA ligase"/>
    <property type="match status" value="1"/>
</dbReference>
<dbReference type="FunFam" id="3.40.50.620:FF:000062">
    <property type="entry name" value="Arginine--tRNA ligase"/>
    <property type="match status" value="1"/>
</dbReference>
<dbReference type="Gene3D" id="3.30.1360.70">
    <property type="entry name" value="Arginyl tRNA synthetase N-terminal domain"/>
    <property type="match status" value="1"/>
</dbReference>
<dbReference type="Gene3D" id="3.40.50.620">
    <property type="entry name" value="HUPs"/>
    <property type="match status" value="1"/>
</dbReference>
<dbReference type="Gene3D" id="1.10.730.10">
    <property type="entry name" value="Isoleucyl-tRNA Synthetase, Domain 1"/>
    <property type="match status" value="1"/>
</dbReference>
<dbReference type="HAMAP" id="MF_00123">
    <property type="entry name" value="Arg_tRNA_synth"/>
    <property type="match status" value="1"/>
</dbReference>
<dbReference type="InterPro" id="IPR001278">
    <property type="entry name" value="Arg-tRNA-ligase"/>
</dbReference>
<dbReference type="InterPro" id="IPR005148">
    <property type="entry name" value="Arg-tRNA-synth_N"/>
</dbReference>
<dbReference type="InterPro" id="IPR036695">
    <property type="entry name" value="Arg-tRNA-synth_N_sf"/>
</dbReference>
<dbReference type="InterPro" id="IPR035684">
    <property type="entry name" value="ArgRS_core"/>
</dbReference>
<dbReference type="InterPro" id="IPR008909">
    <property type="entry name" value="DALR_anticod-bd"/>
</dbReference>
<dbReference type="InterPro" id="IPR014729">
    <property type="entry name" value="Rossmann-like_a/b/a_fold"/>
</dbReference>
<dbReference type="InterPro" id="IPR009080">
    <property type="entry name" value="tRNAsynth_Ia_anticodon-bd"/>
</dbReference>
<dbReference type="NCBIfam" id="TIGR00456">
    <property type="entry name" value="argS"/>
    <property type="match status" value="1"/>
</dbReference>
<dbReference type="PANTHER" id="PTHR11956:SF5">
    <property type="entry name" value="ARGININE--TRNA LIGASE, CYTOPLASMIC"/>
    <property type="match status" value="1"/>
</dbReference>
<dbReference type="PANTHER" id="PTHR11956">
    <property type="entry name" value="ARGINYL-TRNA SYNTHETASE"/>
    <property type="match status" value="1"/>
</dbReference>
<dbReference type="Pfam" id="PF03485">
    <property type="entry name" value="Arg_tRNA_synt_N"/>
    <property type="match status" value="1"/>
</dbReference>
<dbReference type="Pfam" id="PF05746">
    <property type="entry name" value="DALR_1"/>
    <property type="match status" value="1"/>
</dbReference>
<dbReference type="Pfam" id="PF00750">
    <property type="entry name" value="tRNA-synt_1d"/>
    <property type="match status" value="1"/>
</dbReference>
<dbReference type="PRINTS" id="PR01038">
    <property type="entry name" value="TRNASYNTHARG"/>
</dbReference>
<dbReference type="SMART" id="SM01016">
    <property type="entry name" value="Arg_tRNA_synt_N"/>
    <property type="match status" value="1"/>
</dbReference>
<dbReference type="SMART" id="SM00836">
    <property type="entry name" value="DALR_1"/>
    <property type="match status" value="1"/>
</dbReference>
<dbReference type="SUPFAM" id="SSF47323">
    <property type="entry name" value="Anticodon-binding domain of a subclass of class I aminoacyl-tRNA synthetases"/>
    <property type="match status" value="1"/>
</dbReference>
<dbReference type="SUPFAM" id="SSF55190">
    <property type="entry name" value="Arginyl-tRNA synthetase (ArgRS), N-terminal 'additional' domain"/>
    <property type="match status" value="1"/>
</dbReference>
<dbReference type="SUPFAM" id="SSF52374">
    <property type="entry name" value="Nucleotidylyl transferase"/>
    <property type="match status" value="1"/>
</dbReference>
<comment type="catalytic activity">
    <reaction evidence="1">
        <text>tRNA(Arg) + L-arginine + ATP = L-arginyl-tRNA(Arg) + AMP + diphosphate</text>
        <dbReference type="Rhea" id="RHEA:20301"/>
        <dbReference type="Rhea" id="RHEA-COMP:9658"/>
        <dbReference type="Rhea" id="RHEA-COMP:9673"/>
        <dbReference type="ChEBI" id="CHEBI:30616"/>
        <dbReference type="ChEBI" id="CHEBI:32682"/>
        <dbReference type="ChEBI" id="CHEBI:33019"/>
        <dbReference type="ChEBI" id="CHEBI:78442"/>
        <dbReference type="ChEBI" id="CHEBI:78513"/>
        <dbReference type="ChEBI" id="CHEBI:456215"/>
        <dbReference type="EC" id="6.1.1.19"/>
    </reaction>
</comment>
<comment type="subunit">
    <text evidence="1">Monomer.</text>
</comment>
<comment type="subcellular location">
    <subcellularLocation>
        <location evidence="1">Cytoplasm</location>
    </subcellularLocation>
</comment>
<comment type="similarity">
    <text evidence="1">Belongs to the class-I aminoacyl-tRNA synthetase family.</text>
</comment>
<feature type="chain" id="PRO_1000198914" description="Arginine--tRNA ligase">
    <location>
        <begin position="1"/>
        <end position="594"/>
    </location>
</feature>
<feature type="short sequence motif" description="'HIGH' region">
    <location>
        <begin position="133"/>
        <end position="143"/>
    </location>
</feature>
<accession>B0SB29</accession>